<reference key="1">
    <citation type="journal article" date="2005" name="Science">
        <title>The transcriptional landscape of the mammalian genome.</title>
        <authorList>
            <person name="Carninci P."/>
            <person name="Kasukawa T."/>
            <person name="Katayama S."/>
            <person name="Gough J."/>
            <person name="Frith M.C."/>
            <person name="Maeda N."/>
            <person name="Oyama R."/>
            <person name="Ravasi T."/>
            <person name="Lenhard B."/>
            <person name="Wells C."/>
            <person name="Kodzius R."/>
            <person name="Shimokawa K."/>
            <person name="Bajic V.B."/>
            <person name="Brenner S.E."/>
            <person name="Batalov S."/>
            <person name="Forrest A.R."/>
            <person name="Zavolan M."/>
            <person name="Davis M.J."/>
            <person name="Wilming L.G."/>
            <person name="Aidinis V."/>
            <person name="Allen J.E."/>
            <person name="Ambesi-Impiombato A."/>
            <person name="Apweiler R."/>
            <person name="Aturaliya R.N."/>
            <person name="Bailey T.L."/>
            <person name="Bansal M."/>
            <person name="Baxter L."/>
            <person name="Beisel K.W."/>
            <person name="Bersano T."/>
            <person name="Bono H."/>
            <person name="Chalk A.M."/>
            <person name="Chiu K.P."/>
            <person name="Choudhary V."/>
            <person name="Christoffels A."/>
            <person name="Clutterbuck D.R."/>
            <person name="Crowe M.L."/>
            <person name="Dalla E."/>
            <person name="Dalrymple B.P."/>
            <person name="de Bono B."/>
            <person name="Della Gatta G."/>
            <person name="di Bernardo D."/>
            <person name="Down T."/>
            <person name="Engstrom P."/>
            <person name="Fagiolini M."/>
            <person name="Faulkner G."/>
            <person name="Fletcher C.F."/>
            <person name="Fukushima T."/>
            <person name="Furuno M."/>
            <person name="Futaki S."/>
            <person name="Gariboldi M."/>
            <person name="Georgii-Hemming P."/>
            <person name="Gingeras T.R."/>
            <person name="Gojobori T."/>
            <person name="Green R.E."/>
            <person name="Gustincich S."/>
            <person name="Harbers M."/>
            <person name="Hayashi Y."/>
            <person name="Hensch T.K."/>
            <person name="Hirokawa N."/>
            <person name="Hill D."/>
            <person name="Huminiecki L."/>
            <person name="Iacono M."/>
            <person name="Ikeo K."/>
            <person name="Iwama A."/>
            <person name="Ishikawa T."/>
            <person name="Jakt M."/>
            <person name="Kanapin A."/>
            <person name="Katoh M."/>
            <person name="Kawasawa Y."/>
            <person name="Kelso J."/>
            <person name="Kitamura H."/>
            <person name="Kitano H."/>
            <person name="Kollias G."/>
            <person name="Krishnan S.P."/>
            <person name="Kruger A."/>
            <person name="Kummerfeld S.K."/>
            <person name="Kurochkin I.V."/>
            <person name="Lareau L.F."/>
            <person name="Lazarevic D."/>
            <person name="Lipovich L."/>
            <person name="Liu J."/>
            <person name="Liuni S."/>
            <person name="McWilliam S."/>
            <person name="Madan Babu M."/>
            <person name="Madera M."/>
            <person name="Marchionni L."/>
            <person name="Matsuda H."/>
            <person name="Matsuzawa S."/>
            <person name="Miki H."/>
            <person name="Mignone F."/>
            <person name="Miyake S."/>
            <person name="Morris K."/>
            <person name="Mottagui-Tabar S."/>
            <person name="Mulder N."/>
            <person name="Nakano N."/>
            <person name="Nakauchi H."/>
            <person name="Ng P."/>
            <person name="Nilsson R."/>
            <person name="Nishiguchi S."/>
            <person name="Nishikawa S."/>
            <person name="Nori F."/>
            <person name="Ohara O."/>
            <person name="Okazaki Y."/>
            <person name="Orlando V."/>
            <person name="Pang K.C."/>
            <person name="Pavan W.J."/>
            <person name="Pavesi G."/>
            <person name="Pesole G."/>
            <person name="Petrovsky N."/>
            <person name="Piazza S."/>
            <person name="Reed J."/>
            <person name="Reid J.F."/>
            <person name="Ring B.Z."/>
            <person name="Ringwald M."/>
            <person name="Rost B."/>
            <person name="Ruan Y."/>
            <person name="Salzberg S.L."/>
            <person name="Sandelin A."/>
            <person name="Schneider C."/>
            <person name="Schoenbach C."/>
            <person name="Sekiguchi K."/>
            <person name="Semple C.A."/>
            <person name="Seno S."/>
            <person name="Sessa L."/>
            <person name="Sheng Y."/>
            <person name="Shibata Y."/>
            <person name="Shimada H."/>
            <person name="Shimada K."/>
            <person name="Silva D."/>
            <person name="Sinclair B."/>
            <person name="Sperling S."/>
            <person name="Stupka E."/>
            <person name="Sugiura K."/>
            <person name="Sultana R."/>
            <person name="Takenaka Y."/>
            <person name="Taki K."/>
            <person name="Tammoja K."/>
            <person name="Tan S.L."/>
            <person name="Tang S."/>
            <person name="Taylor M.S."/>
            <person name="Tegner J."/>
            <person name="Teichmann S.A."/>
            <person name="Ueda H.R."/>
            <person name="van Nimwegen E."/>
            <person name="Verardo R."/>
            <person name="Wei C.L."/>
            <person name="Yagi K."/>
            <person name="Yamanishi H."/>
            <person name="Zabarovsky E."/>
            <person name="Zhu S."/>
            <person name="Zimmer A."/>
            <person name="Hide W."/>
            <person name="Bult C."/>
            <person name="Grimmond S.M."/>
            <person name="Teasdale R.D."/>
            <person name="Liu E.T."/>
            <person name="Brusic V."/>
            <person name="Quackenbush J."/>
            <person name="Wahlestedt C."/>
            <person name="Mattick J.S."/>
            <person name="Hume D.A."/>
            <person name="Kai C."/>
            <person name="Sasaki D."/>
            <person name="Tomaru Y."/>
            <person name="Fukuda S."/>
            <person name="Kanamori-Katayama M."/>
            <person name="Suzuki M."/>
            <person name="Aoki J."/>
            <person name="Arakawa T."/>
            <person name="Iida J."/>
            <person name="Imamura K."/>
            <person name="Itoh M."/>
            <person name="Kato T."/>
            <person name="Kawaji H."/>
            <person name="Kawagashira N."/>
            <person name="Kawashima T."/>
            <person name="Kojima M."/>
            <person name="Kondo S."/>
            <person name="Konno H."/>
            <person name="Nakano K."/>
            <person name="Ninomiya N."/>
            <person name="Nishio T."/>
            <person name="Okada M."/>
            <person name="Plessy C."/>
            <person name="Shibata K."/>
            <person name="Shiraki T."/>
            <person name="Suzuki S."/>
            <person name="Tagami M."/>
            <person name="Waki K."/>
            <person name="Watahiki A."/>
            <person name="Okamura-Oho Y."/>
            <person name="Suzuki H."/>
            <person name="Kawai J."/>
            <person name="Hayashizaki Y."/>
        </authorList>
    </citation>
    <scope>NUCLEOTIDE SEQUENCE [LARGE SCALE MRNA]</scope>
    <source>
        <strain>C57BL/6J</strain>
        <tissue>Amnion</tissue>
        <tissue>Heart</tissue>
        <tissue>Liver</tissue>
    </source>
</reference>
<reference key="2">
    <citation type="submission" date="2005-09" db="EMBL/GenBank/DDBJ databases">
        <authorList>
            <person name="Mural R.J."/>
            <person name="Adams M.D."/>
            <person name="Myers E.W."/>
            <person name="Smith H.O."/>
            <person name="Venter J.C."/>
        </authorList>
    </citation>
    <scope>NUCLEOTIDE SEQUENCE [LARGE SCALE GENOMIC DNA]</scope>
</reference>
<reference key="3">
    <citation type="journal article" date="2004" name="Genome Res.">
        <title>The status, quality, and expansion of the NIH full-length cDNA project: the Mammalian Gene Collection (MGC).</title>
        <authorList>
            <consortium name="The MGC Project Team"/>
        </authorList>
    </citation>
    <scope>NUCLEOTIDE SEQUENCE [LARGE SCALE MRNA]</scope>
    <source>
        <strain>FVB/N</strain>
        <tissue>Liver</tissue>
    </source>
</reference>
<reference key="4">
    <citation type="journal article" date="2007" name="Mol. Cell. Proteomics">
        <title>Mitochondrial phosphoproteome revealed by an improved IMAC method and MS/MS/MS.</title>
        <authorList>
            <person name="Lee J."/>
            <person name="Xu Y."/>
            <person name="Chen Y."/>
            <person name="Sprung R."/>
            <person name="Kim S.C."/>
            <person name="Xie S."/>
            <person name="Zhao Y."/>
        </authorList>
    </citation>
    <scope>PHOSPHORYLATION [LARGE SCALE ANALYSIS] AT SER-344</scope>
    <scope>IDENTIFICATION BY MASS SPECTROMETRY [LARGE SCALE ANALYSIS]</scope>
    <source>
        <tissue>Liver</tissue>
    </source>
</reference>
<reference key="5">
    <citation type="journal article" date="2007" name="Proc. Natl. Acad. Sci. U.S.A.">
        <title>Large-scale phosphorylation analysis of mouse liver.</title>
        <authorList>
            <person name="Villen J."/>
            <person name="Beausoleil S.A."/>
            <person name="Gerber S.A."/>
            <person name="Gygi S.P."/>
        </authorList>
    </citation>
    <scope>PHOSPHORYLATION [LARGE SCALE ANALYSIS] AT SER-28</scope>
    <scope>IDENTIFICATION BY MASS SPECTROMETRY [LARGE SCALE ANALYSIS]</scope>
    <source>
        <tissue>Liver</tissue>
    </source>
</reference>
<reference key="6">
    <citation type="journal article" date="2010" name="Cell">
        <title>A tissue-specific atlas of mouse protein phosphorylation and expression.</title>
        <authorList>
            <person name="Huttlin E.L."/>
            <person name="Jedrychowski M.P."/>
            <person name="Elias J.E."/>
            <person name="Goswami T."/>
            <person name="Rad R."/>
            <person name="Beausoleil S.A."/>
            <person name="Villen J."/>
            <person name="Haas W."/>
            <person name="Sowa M.E."/>
            <person name="Gygi S.P."/>
        </authorList>
    </citation>
    <scope>PHOSPHORYLATION [LARGE SCALE ANALYSIS] AT SER-28; THR-136 AND SER-310</scope>
    <scope>IDENTIFICATION BY MASS SPECTROMETRY [LARGE SCALE ANALYSIS]</scope>
    <source>
        <tissue>Brain</tissue>
        <tissue>Brown adipose tissue</tissue>
        <tissue>Heart</tissue>
        <tissue>Kidney</tissue>
        <tissue>Liver</tissue>
        <tissue>Lung</tissue>
        <tissue>Pancreas</tissue>
        <tissue>Spleen</tissue>
        <tissue>Testis</tissue>
    </source>
</reference>
<reference key="7">
    <citation type="journal article" date="2013" name="Mol. Cell">
        <title>SIRT5-mediated lysine desuccinylation impacts diverse metabolic pathways.</title>
        <authorList>
            <person name="Park J."/>
            <person name="Chen Y."/>
            <person name="Tishkoff D.X."/>
            <person name="Peng C."/>
            <person name="Tan M."/>
            <person name="Dai L."/>
            <person name="Xie Z."/>
            <person name="Zhang Y."/>
            <person name="Zwaans B.M."/>
            <person name="Skinner M.E."/>
            <person name="Lombard D.B."/>
            <person name="Zhao Y."/>
        </authorList>
    </citation>
    <scope>ACETYLATION [LARGE SCALE ANALYSIS] AT LYS-191</scope>
    <scope>SUCCINYLATION [LARGE SCALE ANALYSIS] AT LYS-25; LYS-45; LYS-137; LYS-143; LYS-158; LYS-171; LYS-191; LYS-209; LYS-211; LYS-212; LYS-214; LYS-234; LYS-240; LYS-305 AND LYS-312</scope>
    <scope>IDENTIFICATION BY MASS SPECTROMETRY [LARGE SCALE ANALYSIS]</scope>
    <source>
        <tissue>Liver</tissue>
    </source>
</reference>
<reference key="8">
    <citation type="journal article" date="2013" name="Proc. Natl. Acad. Sci. U.S.A.">
        <title>Label-free quantitative proteomics of the lysine acetylome in mitochondria identifies substrates of SIRT3 in metabolic pathways.</title>
        <authorList>
            <person name="Rardin M.J."/>
            <person name="Newman J.C."/>
            <person name="Held J.M."/>
            <person name="Cusack M.P."/>
            <person name="Sorensen D.J."/>
            <person name="Li B."/>
            <person name="Schilling B."/>
            <person name="Mooney S.D."/>
            <person name="Kahn C.R."/>
            <person name="Verdin E."/>
            <person name="Gibson B.W."/>
        </authorList>
    </citation>
    <scope>ACETYLATION [LARGE SCALE ANALYSIS] AT LYS-25; LYS-137; LYS-143; LYS-158; LYS-171; LYS-191; LYS-209; LYS-234; LYS-241; LYS-269; LYS-270; LYS-305; LYS-312; LYS-340 AND LYS-375</scope>
    <scope>IDENTIFICATION BY MASS SPECTROMETRY [LARGE SCALE ANALYSIS]</scope>
    <source>
        <tissue>Liver</tissue>
    </source>
</reference>
<protein>
    <recommendedName>
        <fullName evidence="5">3-ketoacyl-CoA thiolase, mitochondrial</fullName>
        <ecNumber evidence="3">2.3.1.16</ecNumber>
    </recommendedName>
    <alternativeName>
        <fullName evidence="5">Acetyl-CoA acetyltransferase</fullName>
        <ecNumber evidence="4">2.3.1.9</ecNumber>
    </alternativeName>
    <alternativeName>
        <fullName>Acetyl-CoA acyltransferase</fullName>
    </alternativeName>
    <alternativeName>
        <fullName evidence="5">Acyl-CoA hydrolase, mitochondrial</fullName>
        <ecNumber evidence="3">3.1.2.-</ecNumber>
        <ecNumber evidence="3">3.1.2.1</ecNumber>
        <ecNumber evidence="2">3.1.2.2</ecNumber>
    </alternativeName>
    <alternativeName>
        <fullName>Beta-ketothiolase</fullName>
    </alternativeName>
    <alternativeName>
        <fullName>Mitochondrial 3-oxoacyl-CoA thiolase</fullName>
    </alternativeName>
</protein>
<proteinExistence type="evidence at protein level"/>
<comment type="function">
    <text evidence="2 3">In the production of energy from fats, this is one of the enzymes that catalyzes the last step of the mitochondrial beta-oxidation pathway, an aerobic process breaking down fatty acids into acetyl-CoA. Using free coenzyme A/CoA, catalyzes the thiolytic cleavage of medium- to long-chain unbranched 3-oxoacyl-CoAs into acetyl-CoA and a fatty acyl-CoA shortened by two carbon atoms. Also catalyzes the condensation of two acetyl-CoA molecules into acetoacetyl-CoA and could be involved in the production of ketone bodies. Also displays hydrolase activity on various fatty acyl-CoAs (By similarity). Thereby, could be responsible for the production of acetate in a side reaction to beta-oxidation (By similarity). Abolishes BNIP3-mediated apoptosis and mitochondrial damage (By similarity).</text>
</comment>
<comment type="catalytic activity">
    <reaction evidence="3">
        <text>an acyl-CoA + acetyl-CoA = a 3-oxoacyl-CoA + CoA</text>
        <dbReference type="Rhea" id="RHEA:21564"/>
        <dbReference type="ChEBI" id="CHEBI:57287"/>
        <dbReference type="ChEBI" id="CHEBI:57288"/>
        <dbReference type="ChEBI" id="CHEBI:58342"/>
        <dbReference type="ChEBI" id="CHEBI:90726"/>
        <dbReference type="EC" id="2.3.1.16"/>
    </reaction>
    <physiologicalReaction direction="left-to-right" evidence="3">
        <dbReference type="Rhea" id="RHEA:21565"/>
    </physiologicalReaction>
    <physiologicalReaction direction="right-to-left" evidence="3">
        <dbReference type="Rhea" id="RHEA:21566"/>
    </physiologicalReaction>
</comment>
<comment type="catalytic activity">
    <reaction evidence="4">
        <text>2 acetyl-CoA = acetoacetyl-CoA + CoA</text>
        <dbReference type="Rhea" id="RHEA:21036"/>
        <dbReference type="ChEBI" id="CHEBI:57286"/>
        <dbReference type="ChEBI" id="CHEBI:57287"/>
        <dbReference type="ChEBI" id="CHEBI:57288"/>
        <dbReference type="EC" id="2.3.1.9"/>
    </reaction>
    <physiologicalReaction direction="left-to-right" evidence="3">
        <dbReference type="Rhea" id="RHEA:21037"/>
    </physiologicalReaction>
    <physiologicalReaction direction="right-to-left" evidence="3">
        <dbReference type="Rhea" id="RHEA:21038"/>
    </physiologicalReaction>
</comment>
<comment type="catalytic activity">
    <reaction evidence="3">
        <text>acetyl-CoA + H2O = acetate + CoA + H(+)</text>
        <dbReference type="Rhea" id="RHEA:20289"/>
        <dbReference type="ChEBI" id="CHEBI:15377"/>
        <dbReference type="ChEBI" id="CHEBI:15378"/>
        <dbReference type="ChEBI" id="CHEBI:30089"/>
        <dbReference type="ChEBI" id="CHEBI:57287"/>
        <dbReference type="ChEBI" id="CHEBI:57288"/>
        <dbReference type="EC" id="3.1.2.1"/>
    </reaction>
    <physiologicalReaction direction="left-to-right" evidence="3">
        <dbReference type="Rhea" id="RHEA:20290"/>
    </physiologicalReaction>
</comment>
<comment type="catalytic activity">
    <reaction evidence="3">
        <text>propanoyl-CoA + H2O = propanoate + CoA + H(+)</text>
        <dbReference type="Rhea" id="RHEA:40103"/>
        <dbReference type="ChEBI" id="CHEBI:15377"/>
        <dbReference type="ChEBI" id="CHEBI:15378"/>
        <dbReference type="ChEBI" id="CHEBI:17272"/>
        <dbReference type="ChEBI" id="CHEBI:57287"/>
        <dbReference type="ChEBI" id="CHEBI:57392"/>
    </reaction>
    <physiologicalReaction direction="left-to-right" evidence="3">
        <dbReference type="Rhea" id="RHEA:40104"/>
    </physiologicalReaction>
</comment>
<comment type="catalytic activity">
    <reaction evidence="3">
        <text>butanoyl-CoA + H2O = butanoate + CoA + H(+)</text>
        <dbReference type="Rhea" id="RHEA:40111"/>
        <dbReference type="ChEBI" id="CHEBI:15377"/>
        <dbReference type="ChEBI" id="CHEBI:15378"/>
        <dbReference type="ChEBI" id="CHEBI:17968"/>
        <dbReference type="ChEBI" id="CHEBI:57287"/>
        <dbReference type="ChEBI" id="CHEBI:57371"/>
    </reaction>
    <physiologicalReaction direction="left-to-right" evidence="3">
        <dbReference type="Rhea" id="RHEA:40112"/>
    </physiologicalReaction>
</comment>
<comment type="catalytic activity">
    <reaction evidence="3">
        <text>hexanoyl-CoA + H2O = hexanoate + CoA + H(+)</text>
        <dbReference type="Rhea" id="RHEA:40115"/>
        <dbReference type="ChEBI" id="CHEBI:15377"/>
        <dbReference type="ChEBI" id="CHEBI:15378"/>
        <dbReference type="ChEBI" id="CHEBI:17120"/>
        <dbReference type="ChEBI" id="CHEBI:57287"/>
        <dbReference type="ChEBI" id="CHEBI:62620"/>
    </reaction>
    <physiologicalReaction direction="left-to-right" evidence="3">
        <dbReference type="Rhea" id="RHEA:40116"/>
    </physiologicalReaction>
</comment>
<comment type="catalytic activity">
    <reaction evidence="3">
        <text>octanoyl-CoA + H2O = octanoate + CoA + H(+)</text>
        <dbReference type="Rhea" id="RHEA:30143"/>
        <dbReference type="ChEBI" id="CHEBI:15377"/>
        <dbReference type="ChEBI" id="CHEBI:15378"/>
        <dbReference type="ChEBI" id="CHEBI:25646"/>
        <dbReference type="ChEBI" id="CHEBI:57287"/>
        <dbReference type="ChEBI" id="CHEBI:57386"/>
    </reaction>
    <physiologicalReaction direction="left-to-right" evidence="3">
        <dbReference type="Rhea" id="RHEA:30144"/>
    </physiologicalReaction>
</comment>
<comment type="catalytic activity">
    <reaction evidence="3">
        <text>decanoyl-CoA + H2O = decanoate + CoA + H(+)</text>
        <dbReference type="Rhea" id="RHEA:40059"/>
        <dbReference type="ChEBI" id="CHEBI:15377"/>
        <dbReference type="ChEBI" id="CHEBI:15378"/>
        <dbReference type="ChEBI" id="CHEBI:27689"/>
        <dbReference type="ChEBI" id="CHEBI:57287"/>
        <dbReference type="ChEBI" id="CHEBI:61430"/>
    </reaction>
    <physiologicalReaction direction="left-to-right" evidence="3">
        <dbReference type="Rhea" id="RHEA:40060"/>
    </physiologicalReaction>
</comment>
<comment type="catalytic activity">
    <reaction evidence="3">
        <text>dodecanoyl-CoA + H2O = dodecanoate + CoA + H(+)</text>
        <dbReference type="Rhea" id="RHEA:30135"/>
        <dbReference type="ChEBI" id="CHEBI:15377"/>
        <dbReference type="ChEBI" id="CHEBI:15378"/>
        <dbReference type="ChEBI" id="CHEBI:18262"/>
        <dbReference type="ChEBI" id="CHEBI:57287"/>
        <dbReference type="ChEBI" id="CHEBI:57375"/>
    </reaction>
    <physiologicalReaction direction="left-to-right" evidence="3">
        <dbReference type="Rhea" id="RHEA:30136"/>
    </physiologicalReaction>
</comment>
<comment type="catalytic activity">
    <reaction evidence="3">
        <text>tetradecanoyl-CoA + H2O = tetradecanoate + CoA + H(+)</text>
        <dbReference type="Rhea" id="RHEA:40119"/>
        <dbReference type="ChEBI" id="CHEBI:15377"/>
        <dbReference type="ChEBI" id="CHEBI:15378"/>
        <dbReference type="ChEBI" id="CHEBI:30807"/>
        <dbReference type="ChEBI" id="CHEBI:57287"/>
        <dbReference type="ChEBI" id="CHEBI:57385"/>
    </reaction>
    <physiologicalReaction direction="left-to-right" evidence="3">
        <dbReference type="Rhea" id="RHEA:40120"/>
    </physiologicalReaction>
</comment>
<comment type="catalytic activity">
    <reaction evidence="2">
        <text>hexadecanoyl-CoA + H2O = hexadecanoate + CoA + H(+)</text>
        <dbReference type="Rhea" id="RHEA:16645"/>
        <dbReference type="ChEBI" id="CHEBI:7896"/>
        <dbReference type="ChEBI" id="CHEBI:15377"/>
        <dbReference type="ChEBI" id="CHEBI:15378"/>
        <dbReference type="ChEBI" id="CHEBI:57287"/>
        <dbReference type="ChEBI" id="CHEBI:57379"/>
        <dbReference type="EC" id="3.1.2.2"/>
    </reaction>
    <physiologicalReaction direction="left-to-right" evidence="3">
        <dbReference type="Rhea" id="RHEA:16646"/>
    </physiologicalReaction>
</comment>
<comment type="pathway">
    <text evidence="3">Lipid metabolism; fatty acid beta-oxidation.</text>
</comment>
<comment type="subunit">
    <text evidence="3">Homotetramer. Interacts with BNIP3.</text>
</comment>
<comment type="subcellular location">
    <subcellularLocation>
        <location evidence="3">Mitochondrion</location>
    </subcellularLocation>
</comment>
<comment type="similarity">
    <text evidence="5">Belongs to the thiolase-like superfamily. Thiolase family.</text>
</comment>
<sequence>MALLRGVFIVAAKRTPFGAYGGLLKDFSATDLTEFAARAALSAGKVPPETIDSVIVGNVMQSSSDAAYLARHVGLRVGVPTETGALTLNRLCGSGFQSIVSGCQEICSKDAEVVLCGGTESMSQSPYCVRNVRFGTKFGLDLKLEDTLWAGLTDQHVKLPMGMTAENLAAKYNISREDCDRYALQSQQRWKAANEAGYFNEEMAPIEVKTKKGKQTMQVDEHARPQTTLEQLQKLPSVFKKDGTVTAGNASGVSDGAGAVIIASEDAVKKHNFTPLARVVGYFVSGCDPTIMGIGPVPAINGALKKAGLSLKDMDLIDVNEAFAPQFLSVQKALDLDPSKTNVSGGAIALGHPLGGSGSRITAHLVHELRRRGGKYAVGSACIGGGQGIALIIQNTA</sequence>
<evidence type="ECO:0000250" key="1"/>
<evidence type="ECO:0000250" key="2">
    <source>
        <dbReference type="UniProtKB" id="P13437"/>
    </source>
</evidence>
<evidence type="ECO:0000250" key="3">
    <source>
        <dbReference type="UniProtKB" id="P42765"/>
    </source>
</evidence>
<evidence type="ECO:0000255" key="4">
    <source>
        <dbReference type="PROSITE-ProRule" id="PRU10020"/>
    </source>
</evidence>
<evidence type="ECO:0000305" key="5"/>
<evidence type="ECO:0007744" key="6">
    <source>
    </source>
</evidence>
<evidence type="ECO:0007744" key="7">
    <source>
    </source>
</evidence>
<evidence type="ECO:0007744" key="8">
    <source>
    </source>
</evidence>
<evidence type="ECO:0007744" key="9">
    <source>
    </source>
</evidence>
<evidence type="ECO:0007744" key="10">
    <source>
    </source>
</evidence>
<feature type="chain" id="PRO_0000223300" description="3-ketoacyl-CoA thiolase, mitochondrial">
    <location>
        <begin position="1"/>
        <end position="397"/>
    </location>
</feature>
<feature type="transit peptide" description="Mitochondrion; not cleaved" evidence="1">
    <location>
        <begin position="1"/>
        <end position="16"/>
    </location>
</feature>
<feature type="active site" description="Acyl-thioester intermediate" evidence="3">
    <location>
        <position position="92"/>
    </location>
</feature>
<feature type="active site" description="Proton donor/acceptor" evidence="3">
    <location>
        <position position="382"/>
    </location>
</feature>
<feature type="binding site" evidence="3">
    <location>
        <position position="224"/>
    </location>
    <ligand>
        <name>CoA</name>
        <dbReference type="ChEBI" id="CHEBI:57287"/>
    </ligand>
</feature>
<feature type="binding site" evidence="3">
    <location>
        <position position="227"/>
    </location>
    <ligand>
        <name>CoA</name>
        <dbReference type="ChEBI" id="CHEBI:57287"/>
    </ligand>
</feature>
<feature type="binding site" evidence="3">
    <location>
        <position position="251"/>
    </location>
    <ligand>
        <name>CoA</name>
        <dbReference type="ChEBI" id="CHEBI:57287"/>
    </ligand>
</feature>
<feature type="site" description="Increases nucleophilicity of active site Cys" evidence="3">
    <location>
        <position position="352"/>
    </location>
</feature>
<feature type="modified residue" description="N6-acetyllysine; alternate" evidence="9">
    <location>
        <position position="25"/>
    </location>
</feature>
<feature type="modified residue" description="N6-succinyllysine; alternate" evidence="10">
    <location>
        <position position="25"/>
    </location>
</feature>
<feature type="modified residue" description="Phosphoserine" evidence="7 8">
    <location>
        <position position="28"/>
    </location>
</feature>
<feature type="modified residue" description="N6-succinyllysine" evidence="10">
    <location>
        <position position="45"/>
    </location>
</feature>
<feature type="modified residue" description="Phosphothreonine" evidence="3">
    <location>
        <position position="119"/>
    </location>
</feature>
<feature type="modified residue" description="Phosphoserine" evidence="3">
    <location>
        <position position="121"/>
    </location>
</feature>
<feature type="modified residue" description="Phosphotyrosine" evidence="3">
    <location>
        <position position="127"/>
    </location>
</feature>
<feature type="modified residue" description="Phosphothreonine" evidence="8">
    <location>
        <position position="136"/>
    </location>
</feature>
<feature type="modified residue" description="N6-acetyllysine; alternate" evidence="9">
    <location>
        <position position="137"/>
    </location>
</feature>
<feature type="modified residue" description="N6-succinyllysine; alternate" evidence="10">
    <location>
        <position position="137"/>
    </location>
</feature>
<feature type="modified residue" description="N6-acetyllysine; alternate" evidence="9">
    <location>
        <position position="143"/>
    </location>
</feature>
<feature type="modified residue" description="N6-succinyllysine; alternate" evidence="10">
    <location>
        <position position="143"/>
    </location>
</feature>
<feature type="modified residue" description="N6-acetyllysine; alternate" evidence="9">
    <location>
        <position position="158"/>
    </location>
</feature>
<feature type="modified residue" description="N6-succinyllysine; alternate" evidence="10">
    <location>
        <position position="158"/>
    </location>
</feature>
<feature type="modified residue" description="N6-acetyllysine; alternate" evidence="9">
    <location>
        <position position="171"/>
    </location>
</feature>
<feature type="modified residue" description="N6-succinyllysine; alternate" evidence="10">
    <location>
        <position position="171"/>
    </location>
</feature>
<feature type="modified residue" description="N6-acetyllysine; alternate" evidence="9 10">
    <location>
        <position position="191"/>
    </location>
</feature>
<feature type="modified residue" description="N6-succinyllysine; alternate" evidence="10">
    <location>
        <position position="191"/>
    </location>
</feature>
<feature type="modified residue" description="N6-acetyllysine; alternate" evidence="9">
    <location>
        <position position="209"/>
    </location>
</feature>
<feature type="modified residue" description="N6-succinyllysine; alternate" evidence="10">
    <location>
        <position position="209"/>
    </location>
</feature>
<feature type="modified residue" description="N6-succinyllysine" evidence="10">
    <location>
        <position position="211"/>
    </location>
</feature>
<feature type="modified residue" description="N6-succinyllysine" evidence="10">
    <location>
        <position position="212"/>
    </location>
</feature>
<feature type="modified residue" description="N6-succinyllysine" evidence="10">
    <location>
        <position position="214"/>
    </location>
</feature>
<feature type="modified residue" description="N6-acetyllysine; alternate" evidence="9">
    <location>
        <position position="234"/>
    </location>
</feature>
<feature type="modified residue" description="N6-succinyllysine; alternate" evidence="10">
    <location>
        <position position="234"/>
    </location>
</feature>
<feature type="modified residue" description="N6-succinyllysine" evidence="10">
    <location>
        <position position="240"/>
    </location>
</feature>
<feature type="modified residue" description="N6-acetyllysine" evidence="9">
    <location>
        <position position="241"/>
    </location>
</feature>
<feature type="modified residue" description="N6-acetyllysine" evidence="9">
    <location>
        <position position="269"/>
    </location>
</feature>
<feature type="modified residue" description="N6-acetyllysine" evidence="9">
    <location>
        <position position="270"/>
    </location>
</feature>
<feature type="modified residue" description="N6-acetyllysine; alternate" evidence="9">
    <location>
        <position position="305"/>
    </location>
</feature>
<feature type="modified residue" description="N6-succinyllysine; alternate" evidence="10">
    <location>
        <position position="305"/>
    </location>
</feature>
<feature type="modified residue" description="Phosphoserine" evidence="8">
    <location>
        <position position="310"/>
    </location>
</feature>
<feature type="modified residue" description="N6-acetyllysine; alternate" evidence="9">
    <location>
        <position position="312"/>
    </location>
</feature>
<feature type="modified residue" description="N6-succinyllysine; alternate" evidence="10">
    <location>
        <position position="312"/>
    </location>
</feature>
<feature type="modified residue" description="N6-acetyllysine" evidence="9">
    <location>
        <position position="340"/>
    </location>
</feature>
<feature type="modified residue" description="Phosphoserine" evidence="6">
    <location>
        <position position="344"/>
    </location>
</feature>
<feature type="modified residue" description="N6-acetyllysine" evidence="9">
    <location>
        <position position="375"/>
    </location>
</feature>
<feature type="sequence conflict" description="In Ref. 3; AAH28901." evidence="5" ref="3">
    <original>A</original>
    <variation>V</variation>
    <location>
        <position position="397"/>
    </location>
</feature>
<name>THIM_MOUSE</name>
<keyword id="KW-0007">Acetylation</keyword>
<keyword id="KW-0012">Acyltransferase</keyword>
<keyword id="KW-0276">Fatty acid metabolism</keyword>
<keyword id="KW-0378">Hydrolase</keyword>
<keyword id="KW-0443">Lipid metabolism</keyword>
<keyword id="KW-0496">Mitochondrion</keyword>
<keyword id="KW-0597">Phosphoprotein</keyword>
<keyword id="KW-1185">Reference proteome</keyword>
<keyword id="KW-0808">Transferase</keyword>
<keyword id="KW-0809">Transit peptide</keyword>
<organism>
    <name type="scientific">Mus musculus</name>
    <name type="common">Mouse</name>
    <dbReference type="NCBI Taxonomy" id="10090"/>
    <lineage>
        <taxon>Eukaryota</taxon>
        <taxon>Metazoa</taxon>
        <taxon>Chordata</taxon>
        <taxon>Craniata</taxon>
        <taxon>Vertebrata</taxon>
        <taxon>Euteleostomi</taxon>
        <taxon>Mammalia</taxon>
        <taxon>Eutheria</taxon>
        <taxon>Euarchontoglires</taxon>
        <taxon>Glires</taxon>
        <taxon>Rodentia</taxon>
        <taxon>Myomorpha</taxon>
        <taxon>Muroidea</taxon>
        <taxon>Muridae</taxon>
        <taxon>Murinae</taxon>
        <taxon>Mus</taxon>
        <taxon>Mus</taxon>
    </lineage>
</organism>
<gene>
    <name type="primary">Acaa2</name>
</gene>
<dbReference type="EC" id="2.3.1.16" evidence="3"/>
<dbReference type="EC" id="2.3.1.9" evidence="4"/>
<dbReference type="EC" id="3.1.2.-" evidence="3"/>
<dbReference type="EC" id="3.1.2.1" evidence="3"/>
<dbReference type="EC" id="3.1.2.2" evidence="2"/>
<dbReference type="EMBL" id="AK050101">
    <property type="protein sequence ID" value="BAC34067.1"/>
    <property type="molecule type" value="mRNA"/>
</dbReference>
<dbReference type="EMBL" id="AK167567">
    <property type="protein sequence ID" value="BAE39630.1"/>
    <property type="molecule type" value="mRNA"/>
</dbReference>
<dbReference type="EMBL" id="AK167715">
    <property type="protein sequence ID" value="BAE39757.1"/>
    <property type="molecule type" value="mRNA"/>
</dbReference>
<dbReference type="EMBL" id="AK169359">
    <property type="protein sequence ID" value="BAE41108.1"/>
    <property type="molecule type" value="mRNA"/>
</dbReference>
<dbReference type="EMBL" id="CH466528">
    <property type="protein sequence ID" value="EDL09521.1"/>
    <property type="molecule type" value="Genomic_DNA"/>
</dbReference>
<dbReference type="EMBL" id="BC028901">
    <property type="protein sequence ID" value="AAH28901.1"/>
    <property type="molecule type" value="mRNA"/>
</dbReference>
<dbReference type="CCDS" id="CCDS29342.1"/>
<dbReference type="RefSeq" id="NP_803421.1">
    <property type="nucleotide sequence ID" value="NM_177470.3"/>
</dbReference>
<dbReference type="SMR" id="Q8BWT1"/>
<dbReference type="BioGRID" id="206649">
    <property type="interactions" value="45"/>
</dbReference>
<dbReference type="FunCoup" id="Q8BWT1">
    <property type="interactions" value="1529"/>
</dbReference>
<dbReference type="IntAct" id="Q8BWT1">
    <property type="interactions" value="9"/>
</dbReference>
<dbReference type="MINT" id="Q8BWT1"/>
<dbReference type="STRING" id="10090.ENSMUSP00000037348"/>
<dbReference type="GlyGen" id="Q8BWT1">
    <property type="glycosylation" value="2 sites, 1 N-linked glycan (1 site), 1 O-linked glycan (1 site)"/>
</dbReference>
<dbReference type="iPTMnet" id="Q8BWT1"/>
<dbReference type="PhosphoSitePlus" id="Q8BWT1"/>
<dbReference type="SwissPalm" id="Q8BWT1"/>
<dbReference type="REPRODUCTION-2DPAGE" id="Q8BWT1"/>
<dbReference type="CPTAC" id="non-CPTAC-3618"/>
<dbReference type="CPTAC" id="non-CPTAC-3883"/>
<dbReference type="jPOST" id="Q8BWT1"/>
<dbReference type="PaxDb" id="10090-ENSMUSP00000037348"/>
<dbReference type="PeptideAtlas" id="Q8BWT1"/>
<dbReference type="ProteomicsDB" id="258872"/>
<dbReference type="Pumba" id="Q8BWT1"/>
<dbReference type="Antibodypedia" id="22617">
    <property type="antibodies" value="391 antibodies from 30 providers"/>
</dbReference>
<dbReference type="Ensembl" id="ENSMUST00000041053.11">
    <property type="protein sequence ID" value="ENSMUSP00000037348.10"/>
    <property type="gene ID" value="ENSMUSG00000036880.11"/>
</dbReference>
<dbReference type="GeneID" id="52538"/>
<dbReference type="KEGG" id="mmu:52538"/>
<dbReference type="UCSC" id="uc008fpt.1">
    <property type="organism name" value="mouse"/>
</dbReference>
<dbReference type="AGR" id="MGI:1098623"/>
<dbReference type="CTD" id="10449"/>
<dbReference type="MGI" id="MGI:1098623">
    <property type="gene designation" value="Acaa2"/>
</dbReference>
<dbReference type="VEuPathDB" id="HostDB:ENSMUSG00000036880"/>
<dbReference type="eggNOG" id="KOG1391">
    <property type="taxonomic scope" value="Eukaryota"/>
</dbReference>
<dbReference type="GeneTree" id="ENSGT01030000234626"/>
<dbReference type="HOGENOM" id="CLU_031026_0_0_1"/>
<dbReference type="InParanoid" id="Q8BWT1"/>
<dbReference type="OMA" id="RWCASSM"/>
<dbReference type="OrthoDB" id="5404651at2759"/>
<dbReference type="PhylomeDB" id="Q8BWT1"/>
<dbReference type="TreeFam" id="TF105696"/>
<dbReference type="BRENDA" id="2.3.1.16">
    <property type="organism ID" value="3474"/>
</dbReference>
<dbReference type="Reactome" id="R-MMU-77289">
    <property type="pathway name" value="Mitochondrial Fatty Acid Beta-Oxidation"/>
</dbReference>
<dbReference type="UniPathway" id="UPA00659"/>
<dbReference type="BioGRID-ORCS" id="52538">
    <property type="hits" value="1 hit in 80 CRISPR screens"/>
</dbReference>
<dbReference type="ChiTaRS" id="Acaa2">
    <property type="organism name" value="mouse"/>
</dbReference>
<dbReference type="PRO" id="PR:Q8BWT1"/>
<dbReference type="Proteomes" id="UP000000589">
    <property type="component" value="Chromosome 18"/>
</dbReference>
<dbReference type="RNAct" id="Q8BWT1">
    <property type="molecule type" value="protein"/>
</dbReference>
<dbReference type="Bgee" id="ENSMUSG00000036880">
    <property type="expression patterns" value="Expressed in gall bladder and 288 other cell types or tissues"/>
</dbReference>
<dbReference type="ExpressionAtlas" id="Q8BWT1">
    <property type="expression patterns" value="baseline and differential"/>
</dbReference>
<dbReference type="GO" id="GO:0036064">
    <property type="term" value="C:ciliary basal body"/>
    <property type="evidence" value="ECO:0007669"/>
    <property type="project" value="Ensembl"/>
</dbReference>
<dbReference type="GO" id="GO:0005743">
    <property type="term" value="C:mitochondrial inner membrane"/>
    <property type="evidence" value="ECO:0007005"/>
    <property type="project" value="MGI"/>
</dbReference>
<dbReference type="GO" id="GO:0005739">
    <property type="term" value="C:mitochondrion"/>
    <property type="evidence" value="ECO:0007005"/>
    <property type="project" value="MGI"/>
</dbReference>
<dbReference type="GO" id="GO:0016604">
    <property type="term" value="C:nuclear body"/>
    <property type="evidence" value="ECO:0007669"/>
    <property type="project" value="Ensembl"/>
</dbReference>
<dbReference type="GO" id="GO:0003985">
    <property type="term" value="F:acetyl-CoA C-acetyltransferase activity"/>
    <property type="evidence" value="ECO:0000250"/>
    <property type="project" value="UniProtKB"/>
</dbReference>
<dbReference type="GO" id="GO:0003988">
    <property type="term" value="F:acetyl-CoA C-acyltransferase activity"/>
    <property type="evidence" value="ECO:0000250"/>
    <property type="project" value="UniProtKB"/>
</dbReference>
<dbReference type="GO" id="GO:0003986">
    <property type="term" value="F:acetyl-CoA hydrolase activity"/>
    <property type="evidence" value="ECO:0007669"/>
    <property type="project" value="UniProtKB-EC"/>
</dbReference>
<dbReference type="GO" id="GO:0047617">
    <property type="term" value="F:fatty acyl-CoA hydrolase activity"/>
    <property type="evidence" value="ECO:0000250"/>
    <property type="project" value="UniProtKB"/>
</dbReference>
<dbReference type="GO" id="GO:0071456">
    <property type="term" value="P:cellular response to hypoxia"/>
    <property type="evidence" value="ECO:0007669"/>
    <property type="project" value="Ensembl"/>
</dbReference>
<dbReference type="GO" id="GO:0006635">
    <property type="term" value="P:fatty acid beta-oxidation"/>
    <property type="evidence" value="ECO:0007669"/>
    <property type="project" value="UniProtKB-UniPathway"/>
</dbReference>
<dbReference type="GO" id="GO:1902109">
    <property type="term" value="P:negative regulation of mitochondrial membrane permeability involved in apoptotic process"/>
    <property type="evidence" value="ECO:0007669"/>
    <property type="project" value="Ensembl"/>
</dbReference>
<dbReference type="GO" id="GO:1901029">
    <property type="term" value="P:negative regulation of mitochondrial outer membrane permeabilization involved in apoptotic signaling pathway"/>
    <property type="evidence" value="ECO:0000250"/>
    <property type="project" value="UniProtKB"/>
</dbReference>
<dbReference type="CDD" id="cd00751">
    <property type="entry name" value="thiolase"/>
    <property type="match status" value="1"/>
</dbReference>
<dbReference type="FunFam" id="3.40.47.10:FF:000010">
    <property type="entry name" value="Acetyl-CoA acetyltransferase (Thiolase)"/>
    <property type="match status" value="1"/>
</dbReference>
<dbReference type="Gene3D" id="3.40.47.10">
    <property type="match status" value="2"/>
</dbReference>
<dbReference type="InterPro" id="IPR002155">
    <property type="entry name" value="Thiolase"/>
</dbReference>
<dbReference type="InterPro" id="IPR016039">
    <property type="entry name" value="Thiolase-like"/>
</dbReference>
<dbReference type="InterPro" id="IPR020615">
    <property type="entry name" value="Thiolase_acyl_enz_int_AS"/>
</dbReference>
<dbReference type="InterPro" id="IPR020610">
    <property type="entry name" value="Thiolase_AS"/>
</dbReference>
<dbReference type="InterPro" id="IPR020617">
    <property type="entry name" value="Thiolase_C"/>
</dbReference>
<dbReference type="InterPro" id="IPR020613">
    <property type="entry name" value="Thiolase_CS"/>
</dbReference>
<dbReference type="InterPro" id="IPR020616">
    <property type="entry name" value="Thiolase_N"/>
</dbReference>
<dbReference type="NCBIfam" id="TIGR01930">
    <property type="entry name" value="AcCoA-C-Actrans"/>
    <property type="match status" value="1"/>
</dbReference>
<dbReference type="PANTHER" id="PTHR18919:SF107">
    <property type="entry name" value="ACETYL-COA ACETYLTRANSFERASE, CYTOSOLIC"/>
    <property type="match status" value="1"/>
</dbReference>
<dbReference type="PANTHER" id="PTHR18919">
    <property type="entry name" value="ACETYL-COA C-ACYLTRANSFERASE"/>
    <property type="match status" value="1"/>
</dbReference>
<dbReference type="Pfam" id="PF02803">
    <property type="entry name" value="Thiolase_C"/>
    <property type="match status" value="1"/>
</dbReference>
<dbReference type="Pfam" id="PF00108">
    <property type="entry name" value="Thiolase_N"/>
    <property type="match status" value="1"/>
</dbReference>
<dbReference type="PIRSF" id="PIRSF000429">
    <property type="entry name" value="Ac-CoA_Ac_transf"/>
    <property type="match status" value="1"/>
</dbReference>
<dbReference type="SUPFAM" id="SSF53901">
    <property type="entry name" value="Thiolase-like"/>
    <property type="match status" value="2"/>
</dbReference>
<dbReference type="PROSITE" id="PS00098">
    <property type="entry name" value="THIOLASE_1"/>
    <property type="match status" value="1"/>
</dbReference>
<dbReference type="PROSITE" id="PS00737">
    <property type="entry name" value="THIOLASE_2"/>
    <property type="match status" value="1"/>
</dbReference>
<dbReference type="PROSITE" id="PS00099">
    <property type="entry name" value="THIOLASE_3"/>
    <property type="match status" value="1"/>
</dbReference>
<accession>Q8BWT1</accession>
<accession>Q3TIT9</accession>
<accession>Q8JZR8</accession>